<accession>P63223</accession>
<accession>Q8XGZ8</accession>
<name>GMHA_SALTY</name>
<evidence type="ECO:0000255" key="1">
    <source>
        <dbReference type="HAMAP-Rule" id="MF_00067"/>
    </source>
</evidence>
<evidence type="ECO:0000269" key="2">
    <source>
    </source>
</evidence>
<dbReference type="EC" id="5.3.1.28" evidence="1"/>
<dbReference type="EMBL" id="AE006468">
    <property type="protein sequence ID" value="AAL19267.1"/>
    <property type="molecule type" value="Genomic_DNA"/>
</dbReference>
<dbReference type="RefSeq" id="WP_000284051.1">
    <property type="nucleotide sequence ID" value="NC_003197.2"/>
</dbReference>
<dbReference type="SMR" id="P63223"/>
<dbReference type="STRING" id="99287.STM0310"/>
<dbReference type="PaxDb" id="99287-STM0310"/>
<dbReference type="GeneID" id="66754793"/>
<dbReference type="KEGG" id="stm:STM0310"/>
<dbReference type="PATRIC" id="fig|99287.12.peg.329"/>
<dbReference type="HOGENOM" id="CLU_080999_4_0_6"/>
<dbReference type="OMA" id="KDEANIH"/>
<dbReference type="PhylomeDB" id="P63223"/>
<dbReference type="BioCyc" id="SENT99287:STM0310-MONOMER"/>
<dbReference type="BRENDA" id="5.3.1.28">
    <property type="organism ID" value="5542"/>
</dbReference>
<dbReference type="UniPathway" id="UPA00041">
    <property type="reaction ID" value="UER00436"/>
</dbReference>
<dbReference type="UniPathway" id="UPA00958"/>
<dbReference type="Proteomes" id="UP000001014">
    <property type="component" value="Chromosome"/>
</dbReference>
<dbReference type="GO" id="GO:0005829">
    <property type="term" value="C:cytosol"/>
    <property type="evidence" value="ECO:0000318"/>
    <property type="project" value="GO_Central"/>
</dbReference>
<dbReference type="GO" id="GO:0097367">
    <property type="term" value="F:carbohydrate derivative binding"/>
    <property type="evidence" value="ECO:0007669"/>
    <property type="project" value="InterPro"/>
</dbReference>
<dbReference type="GO" id="GO:0008968">
    <property type="term" value="F:D-sedoheptulose 7-phosphate isomerase activity"/>
    <property type="evidence" value="ECO:0000318"/>
    <property type="project" value="GO_Central"/>
</dbReference>
<dbReference type="GO" id="GO:0008270">
    <property type="term" value="F:zinc ion binding"/>
    <property type="evidence" value="ECO:0007669"/>
    <property type="project" value="UniProtKB-UniRule"/>
</dbReference>
<dbReference type="GO" id="GO:2001061">
    <property type="term" value="P:D-glycero-D-manno-heptose 7-phosphate biosynthetic process"/>
    <property type="evidence" value="ECO:0000318"/>
    <property type="project" value="GO_Central"/>
</dbReference>
<dbReference type="GO" id="GO:0009244">
    <property type="term" value="P:lipopolysaccharide core region biosynthetic process"/>
    <property type="evidence" value="ECO:0007669"/>
    <property type="project" value="UniProtKB-UniPathway"/>
</dbReference>
<dbReference type="CDD" id="cd05006">
    <property type="entry name" value="SIS_GmhA"/>
    <property type="match status" value="1"/>
</dbReference>
<dbReference type="FunFam" id="3.40.50.10490:FF:000013">
    <property type="entry name" value="Phosphoheptose isomerase"/>
    <property type="match status" value="1"/>
</dbReference>
<dbReference type="Gene3D" id="3.40.50.10490">
    <property type="entry name" value="Glucose-6-phosphate isomerase like protein, domain 1"/>
    <property type="match status" value="1"/>
</dbReference>
<dbReference type="HAMAP" id="MF_00067">
    <property type="entry name" value="GmhA"/>
    <property type="match status" value="1"/>
</dbReference>
<dbReference type="InterPro" id="IPR035461">
    <property type="entry name" value="GmhA/DiaA"/>
</dbReference>
<dbReference type="InterPro" id="IPR004515">
    <property type="entry name" value="Phosphoheptose_Isoase"/>
</dbReference>
<dbReference type="InterPro" id="IPR001347">
    <property type="entry name" value="SIS_dom"/>
</dbReference>
<dbReference type="InterPro" id="IPR046348">
    <property type="entry name" value="SIS_dom_sf"/>
</dbReference>
<dbReference type="InterPro" id="IPR050099">
    <property type="entry name" value="SIS_GmhA/DiaA_subfam"/>
</dbReference>
<dbReference type="NCBIfam" id="TIGR00441">
    <property type="entry name" value="gmhA"/>
    <property type="match status" value="1"/>
</dbReference>
<dbReference type="NCBIfam" id="NF001628">
    <property type="entry name" value="PRK00414.1"/>
    <property type="match status" value="1"/>
</dbReference>
<dbReference type="PANTHER" id="PTHR30390:SF7">
    <property type="entry name" value="PHOSPHOHEPTOSE ISOMERASE"/>
    <property type="match status" value="1"/>
</dbReference>
<dbReference type="PANTHER" id="PTHR30390">
    <property type="entry name" value="SEDOHEPTULOSE 7-PHOSPHATE ISOMERASE / DNAA INITIATOR-ASSOCIATING FACTOR FOR REPLICATION INITIATION"/>
    <property type="match status" value="1"/>
</dbReference>
<dbReference type="Pfam" id="PF13580">
    <property type="entry name" value="SIS_2"/>
    <property type="match status" value="1"/>
</dbReference>
<dbReference type="SUPFAM" id="SSF53697">
    <property type="entry name" value="SIS domain"/>
    <property type="match status" value="1"/>
</dbReference>
<dbReference type="PROSITE" id="PS51464">
    <property type="entry name" value="SIS"/>
    <property type="match status" value="1"/>
</dbReference>
<proteinExistence type="inferred from homology"/>
<gene>
    <name evidence="1" type="primary">gmhA</name>
    <name type="synonym">lpcA</name>
    <name type="ordered locus">STM0310</name>
</gene>
<comment type="function">
    <text evidence="1 2">Catalyzes the isomerization of sedoheptulose 7-phosphate in D-glycero-D-manno-heptose 7-phosphate.</text>
</comment>
<comment type="catalytic activity">
    <reaction evidence="1">
        <text>2 D-sedoheptulose 7-phosphate = D-glycero-alpha-D-manno-heptose 7-phosphate + D-glycero-beta-D-manno-heptose 7-phosphate</text>
        <dbReference type="Rhea" id="RHEA:27489"/>
        <dbReference type="ChEBI" id="CHEBI:57483"/>
        <dbReference type="ChEBI" id="CHEBI:60203"/>
        <dbReference type="ChEBI" id="CHEBI:60204"/>
        <dbReference type="EC" id="5.3.1.28"/>
    </reaction>
</comment>
<comment type="cofactor">
    <cofactor evidence="1">
        <name>Zn(2+)</name>
        <dbReference type="ChEBI" id="CHEBI:29105"/>
    </cofactor>
    <text evidence="1">Binds 1 zinc ion per subunit.</text>
</comment>
<comment type="pathway">
    <text evidence="1">Carbohydrate biosynthesis; D-glycero-D-manno-heptose 7-phosphate biosynthesis; D-glycero-alpha-D-manno-heptose 7-phosphate and D-glycero-beta-D-manno-heptose 7-phosphate from sedoheptulose 7-phosphate: step 1/1.</text>
</comment>
<comment type="pathway">
    <text>Bacterial outer membrane biogenesis; LPS core biosynthesis.</text>
</comment>
<comment type="subunit">
    <text evidence="1">Homotetramer.</text>
</comment>
<comment type="subcellular location">
    <subcellularLocation>
        <location evidence="1">Cytoplasm</location>
    </subcellularLocation>
</comment>
<comment type="miscellaneous">
    <text evidence="1">The reaction produces a racemic mixture of D-glycero-alpha-D-manno-heptose 7-phosphate and D-glycero-beta-D-manno-heptose 7-phosphate.</text>
</comment>
<comment type="similarity">
    <text evidence="1">Belongs to the SIS family. GmhA subfamily.</text>
</comment>
<keyword id="KW-0119">Carbohydrate metabolism</keyword>
<keyword id="KW-0963">Cytoplasm</keyword>
<keyword id="KW-0413">Isomerase</keyword>
<keyword id="KW-0448">Lipopolysaccharide biosynthesis</keyword>
<keyword id="KW-0479">Metal-binding</keyword>
<keyword id="KW-1185">Reference proteome</keyword>
<keyword id="KW-0862">Zinc</keyword>
<reference key="1">
    <citation type="journal article" date="2001" name="Nature">
        <title>Complete genome sequence of Salmonella enterica serovar Typhimurium LT2.</title>
        <authorList>
            <person name="McClelland M."/>
            <person name="Sanderson K.E."/>
            <person name="Spieth J."/>
            <person name="Clifton S.W."/>
            <person name="Latreille P."/>
            <person name="Courtney L."/>
            <person name="Porwollik S."/>
            <person name="Ali J."/>
            <person name="Dante M."/>
            <person name="Du F."/>
            <person name="Hou S."/>
            <person name="Layman D."/>
            <person name="Leonard S."/>
            <person name="Nguyen C."/>
            <person name="Scott K."/>
            <person name="Holmes A."/>
            <person name="Grewal N."/>
            <person name="Mulvaney E."/>
            <person name="Ryan E."/>
            <person name="Sun H."/>
            <person name="Florea L."/>
            <person name="Miller W."/>
            <person name="Stoneking T."/>
            <person name="Nhan M."/>
            <person name="Waterston R."/>
            <person name="Wilson R.K."/>
        </authorList>
    </citation>
    <scope>NUCLEOTIDE SEQUENCE [LARGE SCALE GENOMIC DNA]</scope>
    <source>
        <strain>LT2 / SGSC1412 / ATCC 700720</strain>
    </source>
</reference>
<reference key="2">
    <citation type="journal article" date="1974" name="J. Biol. Chem.">
        <title>Phosphoheptose isomerase, first enzyme in the biosynthesis of aldoheptose in Salmonella typhimurium.</title>
        <authorList>
            <person name="Eidels L."/>
            <person name="Osborn M.J."/>
        </authorList>
    </citation>
    <scope>FUNCTION</scope>
</reference>
<reference key="3">
    <citation type="journal article" date="2002" name="Microbiology">
        <title>Novel pathways for biosynthesis of nucleotide-activated glycero-manno-heptose precursors of bacterial glycoproteins and cell surface polysaccharides.</title>
        <authorList>
            <person name="Valvano M.A."/>
            <person name="Messner P."/>
            <person name="Kosma P."/>
        </authorList>
    </citation>
    <scope>BIOSYNTHESIS OF NUCLEOTIDE-ACTIVATED GLYCERO-MANNO-HEPTOSE</scope>
</reference>
<feature type="chain" id="PRO_0000136544" description="Phosphoheptose isomerase">
    <location>
        <begin position="1"/>
        <end position="192"/>
    </location>
</feature>
<feature type="domain" description="SIS" evidence="1">
    <location>
        <begin position="37"/>
        <end position="192"/>
    </location>
</feature>
<feature type="binding site" evidence="1">
    <location>
        <begin position="52"/>
        <end position="54"/>
    </location>
    <ligand>
        <name>substrate</name>
    </ligand>
</feature>
<feature type="binding site" evidence="1">
    <location>
        <position position="61"/>
    </location>
    <ligand>
        <name>Zn(2+)</name>
        <dbReference type="ChEBI" id="CHEBI:29105"/>
    </ligand>
</feature>
<feature type="binding site" evidence="1">
    <location>
        <position position="65"/>
    </location>
    <ligand>
        <name>substrate</name>
    </ligand>
</feature>
<feature type="binding site" evidence="1">
    <location>
        <position position="65"/>
    </location>
    <ligand>
        <name>Zn(2+)</name>
        <dbReference type="ChEBI" id="CHEBI:29105"/>
    </ligand>
</feature>
<feature type="binding site" evidence="1">
    <location>
        <begin position="93"/>
        <end position="94"/>
    </location>
    <ligand>
        <name>substrate</name>
    </ligand>
</feature>
<feature type="binding site" evidence="1">
    <location>
        <begin position="119"/>
        <end position="121"/>
    </location>
    <ligand>
        <name>substrate</name>
    </ligand>
</feature>
<feature type="binding site" evidence="1">
    <location>
        <position position="124"/>
    </location>
    <ligand>
        <name>substrate</name>
    </ligand>
</feature>
<feature type="binding site" evidence="1">
    <location>
        <position position="172"/>
    </location>
    <ligand>
        <name>substrate</name>
    </ligand>
</feature>
<feature type="binding site" evidence="1">
    <location>
        <position position="172"/>
    </location>
    <ligand>
        <name>Zn(2+)</name>
        <dbReference type="ChEBI" id="CHEBI:29105"/>
    </ligand>
</feature>
<feature type="binding site" evidence="1">
    <location>
        <position position="180"/>
    </location>
    <ligand>
        <name>Zn(2+)</name>
        <dbReference type="ChEBI" id="CHEBI:29105"/>
    </ligand>
</feature>
<protein>
    <recommendedName>
        <fullName evidence="1">Phosphoheptose isomerase</fullName>
        <ecNumber evidence="1">5.3.1.28</ecNumber>
    </recommendedName>
    <alternativeName>
        <fullName evidence="1">Sedoheptulose 7-phosphate isomerase</fullName>
    </alternativeName>
</protein>
<organism>
    <name type="scientific">Salmonella typhimurium (strain LT2 / SGSC1412 / ATCC 700720)</name>
    <dbReference type="NCBI Taxonomy" id="99287"/>
    <lineage>
        <taxon>Bacteria</taxon>
        <taxon>Pseudomonadati</taxon>
        <taxon>Pseudomonadota</taxon>
        <taxon>Gammaproteobacteria</taxon>
        <taxon>Enterobacterales</taxon>
        <taxon>Enterobacteriaceae</taxon>
        <taxon>Salmonella</taxon>
    </lineage>
</organism>
<sequence>MYQDLIRNELNEAAETLANFLKDDANIHAIQRAAVLLADSFKAGGKVLSCGNGGSHCDAMHFAEELTGRYRENRPGYPAIAISDVSHISCVSNDFGYDYIFSRYVEAVGREGDVLLGISTSGNSGNVIKAIAAAREKGMKVITLTGKDGGKMAGTADIEIRVPHFGYADRIQEIHIKVIHILIQLIEKEMVK</sequence>